<comment type="similarity">
    <text evidence="1">Belongs to the UPF0262 family.</text>
</comment>
<organism>
    <name type="scientific">Dinoroseobacter shibae (strain DSM 16493 / NCIMB 14021 / DFL 12)</name>
    <dbReference type="NCBI Taxonomy" id="398580"/>
    <lineage>
        <taxon>Bacteria</taxon>
        <taxon>Pseudomonadati</taxon>
        <taxon>Pseudomonadota</taxon>
        <taxon>Alphaproteobacteria</taxon>
        <taxon>Rhodobacterales</taxon>
        <taxon>Roseobacteraceae</taxon>
        <taxon>Dinoroseobacter</taxon>
    </lineage>
</organism>
<sequence>MSHLIDISIDDSALPPPTPEIEQERKVAIFDLLEDNSFKLPAREDRDVPPGPFSLTLAIRERRLVFDVTGPEGAQVAEFHLSLGPFRQVVKDYWQICESYFDAVKKLPPSQIEAIDMARRGIHNEGARILLERLDGKAEVDIDTSRRLFTLICVLHFGA</sequence>
<dbReference type="EMBL" id="CP000830">
    <property type="protein sequence ID" value="ABV92722.1"/>
    <property type="molecule type" value="Genomic_DNA"/>
</dbReference>
<dbReference type="RefSeq" id="WP_012177654.1">
    <property type="nucleotide sequence ID" value="NC_009952.1"/>
</dbReference>
<dbReference type="STRING" id="398580.Dshi_0980"/>
<dbReference type="KEGG" id="dsh:Dshi_0980"/>
<dbReference type="eggNOG" id="COG5328">
    <property type="taxonomic scope" value="Bacteria"/>
</dbReference>
<dbReference type="HOGENOM" id="CLU_112904_0_0_5"/>
<dbReference type="OrthoDB" id="9798434at2"/>
<dbReference type="Proteomes" id="UP000006833">
    <property type="component" value="Chromosome"/>
</dbReference>
<dbReference type="HAMAP" id="MF_00678">
    <property type="entry name" value="UPF0262"/>
    <property type="match status" value="1"/>
</dbReference>
<dbReference type="InterPro" id="IPR008321">
    <property type="entry name" value="UCP032146"/>
</dbReference>
<dbReference type="NCBIfam" id="NF002769">
    <property type="entry name" value="PRK02853.1"/>
    <property type="match status" value="1"/>
</dbReference>
<dbReference type="Pfam" id="PF06793">
    <property type="entry name" value="UPF0262"/>
    <property type="match status" value="1"/>
</dbReference>
<dbReference type="PIRSF" id="PIRSF032146">
    <property type="entry name" value="UCP032146"/>
    <property type="match status" value="1"/>
</dbReference>
<keyword id="KW-1185">Reference proteome</keyword>
<feature type="chain" id="PRO_1000082980" description="UPF0262 protein Dshi_0980">
    <location>
        <begin position="1"/>
        <end position="159"/>
    </location>
</feature>
<name>Y980_DINSH</name>
<reference key="1">
    <citation type="journal article" date="2010" name="ISME J.">
        <title>The complete genome sequence of the algal symbiont Dinoroseobacter shibae: a hitchhiker's guide to life in the sea.</title>
        <authorList>
            <person name="Wagner-Dobler I."/>
            <person name="Ballhausen B."/>
            <person name="Berger M."/>
            <person name="Brinkhoff T."/>
            <person name="Buchholz I."/>
            <person name="Bunk B."/>
            <person name="Cypionka H."/>
            <person name="Daniel R."/>
            <person name="Drepper T."/>
            <person name="Gerdts G."/>
            <person name="Hahnke S."/>
            <person name="Han C."/>
            <person name="Jahn D."/>
            <person name="Kalhoefer D."/>
            <person name="Kiss H."/>
            <person name="Klenk H.P."/>
            <person name="Kyrpides N."/>
            <person name="Liebl W."/>
            <person name="Liesegang H."/>
            <person name="Meincke L."/>
            <person name="Pati A."/>
            <person name="Petersen J."/>
            <person name="Piekarski T."/>
            <person name="Pommerenke C."/>
            <person name="Pradella S."/>
            <person name="Pukall R."/>
            <person name="Rabus R."/>
            <person name="Stackebrandt E."/>
            <person name="Thole S."/>
            <person name="Thompson L."/>
            <person name="Tielen P."/>
            <person name="Tomasch J."/>
            <person name="von Jan M."/>
            <person name="Wanphrut N."/>
            <person name="Wichels A."/>
            <person name="Zech H."/>
            <person name="Simon M."/>
        </authorList>
    </citation>
    <scope>NUCLEOTIDE SEQUENCE [LARGE SCALE GENOMIC DNA]</scope>
    <source>
        <strain>DSM 16493 / NCIMB 14021 / DFL 12</strain>
    </source>
</reference>
<accession>A8LS15</accession>
<protein>
    <recommendedName>
        <fullName evidence="1">UPF0262 protein Dshi_0980</fullName>
    </recommendedName>
</protein>
<evidence type="ECO:0000255" key="1">
    <source>
        <dbReference type="HAMAP-Rule" id="MF_00678"/>
    </source>
</evidence>
<proteinExistence type="inferred from homology"/>
<gene>
    <name type="ordered locus">Dshi_0980</name>
</gene>